<protein>
    <recommendedName>
        <fullName evidence="1">Phosphoglycerate kinase 1</fullName>
        <ecNumber evidence="1">2.7.2.3</ecNumber>
    </recommendedName>
</protein>
<sequence>MSQKTAGKDYLTMDDVELDNKRILLRVDFNSPMDANGNILDDRKIKSHLYTLRSLENSRVVMMSHQGRPGDKDYTTLEAHAKLATELLGRKVTYEDDIFSACARNAIKSLEKGDILLLENTRFYAEENMNRAPEEQARTQMVRKLYPLFDVFINDAFSVSHRSQCSVVGFTEVLPSVAGILMDREITGLDKGLKCHEHPAVFALGGTKAKDIVKVISDILKRGGADRILTTGVVATVFMMAIGIEVGEVNRKFIEDHKYLDQVSIASRLLKEYSGKIIVPKDIALNNDGKREEVKVDKIKGDLPIADIGPETISDYSKFLKEAKLSVFHGPAGIFELESFRLGTEELLKAAAQSNYSIAGGGHTLAAIDQLGLESKYSHLSMGGGASITYLSGEHMPGIEALKNYASRCCKD</sequence>
<organism>
    <name type="scientific">Methanosarcina acetivorans (strain ATCC 35395 / DSM 2834 / JCM 12185 / C2A)</name>
    <dbReference type="NCBI Taxonomy" id="188937"/>
    <lineage>
        <taxon>Archaea</taxon>
        <taxon>Methanobacteriati</taxon>
        <taxon>Methanobacteriota</taxon>
        <taxon>Stenosarchaea group</taxon>
        <taxon>Methanomicrobia</taxon>
        <taxon>Methanosarcinales</taxon>
        <taxon>Methanosarcinaceae</taxon>
        <taxon>Methanosarcina</taxon>
    </lineage>
</organism>
<gene>
    <name evidence="1" type="primary">pgk1</name>
    <name type="ordered locus">MA_2669</name>
</gene>
<keyword id="KW-0067">ATP-binding</keyword>
<keyword id="KW-0963">Cytoplasm</keyword>
<keyword id="KW-0324">Glycolysis</keyword>
<keyword id="KW-0418">Kinase</keyword>
<keyword id="KW-0547">Nucleotide-binding</keyword>
<keyword id="KW-1185">Reference proteome</keyword>
<keyword id="KW-0808">Transferase</keyword>
<feature type="chain" id="PRO_0000146054" description="Phosphoglycerate kinase 1">
    <location>
        <begin position="1"/>
        <end position="412"/>
    </location>
</feature>
<feature type="binding site" evidence="1">
    <location>
        <begin position="28"/>
        <end position="30"/>
    </location>
    <ligand>
        <name>substrate</name>
    </ligand>
</feature>
<feature type="binding site" evidence="1">
    <location>
        <begin position="65"/>
        <end position="68"/>
    </location>
    <ligand>
        <name>substrate</name>
    </ligand>
</feature>
<feature type="binding site" evidence="1">
    <location>
        <position position="122"/>
    </location>
    <ligand>
        <name>substrate</name>
    </ligand>
</feature>
<feature type="binding site" evidence="1">
    <location>
        <position position="162"/>
    </location>
    <ligand>
        <name>substrate</name>
    </ligand>
</feature>
<feature type="binding site" evidence="1">
    <location>
        <position position="336"/>
    </location>
    <ligand>
        <name>ATP</name>
        <dbReference type="ChEBI" id="CHEBI:30616"/>
    </ligand>
</feature>
<feature type="binding site" evidence="1">
    <location>
        <begin position="361"/>
        <end position="364"/>
    </location>
    <ligand>
        <name>ATP</name>
        <dbReference type="ChEBI" id="CHEBI:30616"/>
    </ligand>
</feature>
<dbReference type="EC" id="2.7.2.3" evidence="1"/>
<dbReference type="EMBL" id="AE010299">
    <property type="protein sequence ID" value="AAM06047.1"/>
    <property type="molecule type" value="Genomic_DNA"/>
</dbReference>
<dbReference type="RefSeq" id="WP_011022629.1">
    <property type="nucleotide sequence ID" value="NC_003552.1"/>
</dbReference>
<dbReference type="SMR" id="Q8TMI8"/>
<dbReference type="FunCoup" id="Q8TMI8">
    <property type="interactions" value="191"/>
</dbReference>
<dbReference type="STRING" id="188937.MA_2669"/>
<dbReference type="EnsemblBacteria" id="AAM06047">
    <property type="protein sequence ID" value="AAM06047"/>
    <property type="gene ID" value="MA_2669"/>
</dbReference>
<dbReference type="GeneID" id="1474558"/>
<dbReference type="KEGG" id="mac:MA_2669"/>
<dbReference type="HOGENOM" id="CLU_025427_0_2_2"/>
<dbReference type="InParanoid" id="Q8TMI8"/>
<dbReference type="OrthoDB" id="6575at2157"/>
<dbReference type="PhylomeDB" id="Q8TMI8"/>
<dbReference type="UniPathway" id="UPA00109">
    <property type="reaction ID" value="UER00185"/>
</dbReference>
<dbReference type="Proteomes" id="UP000002487">
    <property type="component" value="Chromosome"/>
</dbReference>
<dbReference type="GO" id="GO:0005829">
    <property type="term" value="C:cytosol"/>
    <property type="evidence" value="ECO:0000318"/>
    <property type="project" value="GO_Central"/>
</dbReference>
<dbReference type="GO" id="GO:0043531">
    <property type="term" value="F:ADP binding"/>
    <property type="evidence" value="ECO:0000318"/>
    <property type="project" value="GO_Central"/>
</dbReference>
<dbReference type="GO" id="GO:0005524">
    <property type="term" value="F:ATP binding"/>
    <property type="evidence" value="ECO:0000318"/>
    <property type="project" value="GO_Central"/>
</dbReference>
<dbReference type="GO" id="GO:0004618">
    <property type="term" value="F:phosphoglycerate kinase activity"/>
    <property type="evidence" value="ECO:0000318"/>
    <property type="project" value="GO_Central"/>
</dbReference>
<dbReference type="GO" id="GO:0006094">
    <property type="term" value="P:gluconeogenesis"/>
    <property type="evidence" value="ECO:0000318"/>
    <property type="project" value="GO_Central"/>
</dbReference>
<dbReference type="GO" id="GO:0006096">
    <property type="term" value="P:glycolytic process"/>
    <property type="evidence" value="ECO:0000318"/>
    <property type="project" value="GO_Central"/>
</dbReference>
<dbReference type="FunFam" id="3.40.50.1260:FF:000006">
    <property type="entry name" value="Phosphoglycerate kinase"/>
    <property type="match status" value="1"/>
</dbReference>
<dbReference type="FunFam" id="3.40.50.1260:FF:000012">
    <property type="entry name" value="Phosphoglycerate kinase"/>
    <property type="match status" value="1"/>
</dbReference>
<dbReference type="Gene3D" id="3.40.50.1260">
    <property type="entry name" value="Phosphoglycerate kinase, N-terminal domain"/>
    <property type="match status" value="2"/>
</dbReference>
<dbReference type="HAMAP" id="MF_00145">
    <property type="entry name" value="Phosphoglyc_kinase"/>
    <property type="match status" value="1"/>
</dbReference>
<dbReference type="InterPro" id="IPR001576">
    <property type="entry name" value="Phosphoglycerate_kinase"/>
</dbReference>
<dbReference type="InterPro" id="IPR015824">
    <property type="entry name" value="Phosphoglycerate_kinase_N"/>
</dbReference>
<dbReference type="InterPro" id="IPR036043">
    <property type="entry name" value="Phosphoglycerate_kinase_sf"/>
</dbReference>
<dbReference type="PANTHER" id="PTHR11406">
    <property type="entry name" value="PHOSPHOGLYCERATE KINASE"/>
    <property type="match status" value="1"/>
</dbReference>
<dbReference type="PANTHER" id="PTHR11406:SF23">
    <property type="entry name" value="PHOSPHOGLYCERATE KINASE 1, CHLOROPLASTIC-RELATED"/>
    <property type="match status" value="1"/>
</dbReference>
<dbReference type="Pfam" id="PF00162">
    <property type="entry name" value="PGK"/>
    <property type="match status" value="1"/>
</dbReference>
<dbReference type="PIRSF" id="PIRSF000724">
    <property type="entry name" value="Pgk"/>
    <property type="match status" value="1"/>
</dbReference>
<dbReference type="PRINTS" id="PR00477">
    <property type="entry name" value="PHGLYCKINASE"/>
</dbReference>
<dbReference type="SUPFAM" id="SSF53748">
    <property type="entry name" value="Phosphoglycerate kinase"/>
    <property type="match status" value="1"/>
</dbReference>
<name>PGK1_METAC</name>
<reference key="1">
    <citation type="journal article" date="2002" name="Genome Res.">
        <title>The genome of Methanosarcina acetivorans reveals extensive metabolic and physiological diversity.</title>
        <authorList>
            <person name="Galagan J.E."/>
            <person name="Nusbaum C."/>
            <person name="Roy A."/>
            <person name="Endrizzi M.G."/>
            <person name="Macdonald P."/>
            <person name="FitzHugh W."/>
            <person name="Calvo S."/>
            <person name="Engels R."/>
            <person name="Smirnov S."/>
            <person name="Atnoor D."/>
            <person name="Brown A."/>
            <person name="Allen N."/>
            <person name="Naylor J."/>
            <person name="Stange-Thomann N."/>
            <person name="DeArellano K."/>
            <person name="Johnson R."/>
            <person name="Linton L."/>
            <person name="McEwan P."/>
            <person name="McKernan K."/>
            <person name="Talamas J."/>
            <person name="Tirrell A."/>
            <person name="Ye W."/>
            <person name="Zimmer A."/>
            <person name="Barber R.D."/>
            <person name="Cann I."/>
            <person name="Graham D.E."/>
            <person name="Grahame D.A."/>
            <person name="Guss A.M."/>
            <person name="Hedderich R."/>
            <person name="Ingram-Smith C."/>
            <person name="Kuettner H.C."/>
            <person name="Krzycki J.A."/>
            <person name="Leigh J.A."/>
            <person name="Li W."/>
            <person name="Liu J."/>
            <person name="Mukhopadhyay B."/>
            <person name="Reeve J.N."/>
            <person name="Smith K."/>
            <person name="Springer T.A."/>
            <person name="Umayam L.A."/>
            <person name="White O."/>
            <person name="White R.H."/>
            <person name="de Macario E.C."/>
            <person name="Ferry J.G."/>
            <person name="Jarrell K.F."/>
            <person name="Jing H."/>
            <person name="Macario A.J.L."/>
            <person name="Paulsen I.T."/>
            <person name="Pritchett M."/>
            <person name="Sowers K.R."/>
            <person name="Swanson R.V."/>
            <person name="Zinder S.H."/>
            <person name="Lander E."/>
            <person name="Metcalf W.W."/>
            <person name="Birren B."/>
        </authorList>
    </citation>
    <scope>NUCLEOTIDE SEQUENCE [LARGE SCALE GENOMIC DNA]</scope>
    <source>
        <strain>ATCC 35395 / DSM 2834 / JCM 12185 / C2A</strain>
    </source>
</reference>
<comment type="catalytic activity">
    <reaction evidence="1">
        <text>(2R)-3-phosphoglycerate + ATP = (2R)-3-phospho-glyceroyl phosphate + ADP</text>
        <dbReference type="Rhea" id="RHEA:14801"/>
        <dbReference type="ChEBI" id="CHEBI:30616"/>
        <dbReference type="ChEBI" id="CHEBI:57604"/>
        <dbReference type="ChEBI" id="CHEBI:58272"/>
        <dbReference type="ChEBI" id="CHEBI:456216"/>
        <dbReference type="EC" id="2.7.2.3"/>
    </reaction>
</comment>
<comment type="pathway">
    <text evidence="1">Carbohydrate degradation; glycolysis; pyruvate from D-glyceraldehyde 3-phosphate: step 2/5.</text>
</comment>
<comment type="subunit">
    <text evidence="1">Monomer.</text>
</comment>
<comment type="subcellular location">
    <subcellularLocation>
        <location evidence="1">Cytoplasm</location>
    </subcellularLocation>
</comment>
<comment type="similarity">
    <text evidence="1">Belongs to the phosphoglycerate kinase family.</text>
</comment>
<evidence type="ECO:0000255" key="1">
    <source>
        <dbReference type="HAMAP-Rule" id="MF_00145"/>
    </source>
</evidence>
<accession>Q8TMI8</accession>
<proteinExistence type="inferred from homology"/>